<name>CLPP1_TRIV2</name>
<comment type="function">
    <text evidence="1">Cleaves peptides in various proteins in a process that requires ATP hydrolysis. Has a chymotrypsin-like activity. Plays a major role in the degradation of misfolded proteins.</text>
</comment>
<comment type="catalytic activity">
    <reaction evidence="1">
        <text>Hydrolysis of proteins to small peptides in the presence of ATP and magnesium. alpha-casein is the usual test substrate. In the absence of ATP, only oligopeptides shorter than five residues are hydrolyzed (such as succinyl-Leu-Tyr-|-NHMec, and Leu-Tyr-Leu-|-Tyr-Trp, in which cleavage of the -Tyr-|-Leu- and -Tyr-|-Trp bonds also occurs).</text>
        <dbReference type="EC" id="3.4.21.92"/>
    </reaction>
</comment>
<comment type="subunit">
    <text evidence="1">Fourteen ClpP subunits assemble into 2 heptameric rings which stack back to back to give a disk-like structure with a central cavity, resembling the structure of eukaryotic proteasomes.</text>
</comment>
<comment type="subcellular location">
    <subcellularLocation>
        <location evidence="1">Cytoplasm</location>
    </subcellularLocation>
</comment>
<comment type="similarity">
    <text evidence="1">Belongs to the peptidase S14 family.</text>
</comment>
<reference key="1">
    <citation type="journal article" date="2014" name="Stand. Genomic Sci.">
        <title>Complete genome sequence of Anabaena variabilis ATCC 29413.</title>
        <authorList>
            <person name="Thiel T."/>
            <person name="Pratte B.S."/>
            <person name="Zhong J."/>
            <person name="Goodwin L."/>
            <person name="Copeland A."/>
            <person name="Lucas S."/>
            <person name="Han C."/>
            <person name="Pitluck S."/>
            <person name="Land M.L."/>
            <person name="Kyrpides N.C."/>
            <person name="Woyke T."/>
        </authorList>
    </citation>
    <scope>NUCLEOTIDE SEQUENCE [LARGE SCALE GENOMIC DNA]</scope>
    <source>
        <strain>ATCC 29413 / PCC 7937</strain>
    </source>
</reference>
<protein>
    <recommendedName>
        <fullName evidence="1">ATP-dependent Clp protease proteolytic subunit 1</fullName>
        <ecNumber evidence="1">3.4.21.92</ecNumber>
    </recommendedName>
    <alternativeName>
        <fullName evidence="1">Endopeptidase Clp 1</fullName>
    </alternativeName>
</protein>
<sequence length="204" mass="22699">MTIPIVIEQSGRGERAFDIYSRLLRERIIFLGQQVDSNLANLIVAQLLFLDAEDPEKDIYLYINSPGGSVTAGMGIFDTMKHIRPDVCTICTGLAASMGAFLLSAGTKGKRMSLPHSRIMIHQPLGGAQGQATDIEIQAREILYHKRRLNDYLAEHTGQPIERIAEDTERDFFMSPDEARDYGLIDQVIDRHAAGSRPVAMVNQ</sequence>
<dbReference type="EC" id="3.4.21.92" evidence="1"/>
<dbReference type="EMBL" id="CP000117">
    <property type="protein sequence ID" value="ABA20171.1"/>
    <property type="molecule type" value="Genomic_DNA"/>
</dbReference>
<dbReference type="SMR" id="Q3MFR5"/>
<dbReference type="STRING" id="240292.Ava_0547"/>
<dbReference type="MEROPS" id="S14.001"/>
<dbReference type="KEGG" id="ava:Ava_0547"/>
<dbReference type="eggNOG" id="COG0740">
    <property type="taxonomic scope" value="Bacteria"/>
</dbReference>
<dbReference type="HOGENOM" id="CLU_058707_3_2_3"/>
<dbReference type="Proteomes" id="UP000002533">
    <property type="component" value="Chromosome"/>
</dbReference>
<dbReference type="GO" id="GO:0005737">
    <property type="term" value="C:cytoplasm"/>
    <property type="evidence" value="ECO:0007669"/>
    <property type="project" value="UniProtKB-SubCell"/>
</dbReference>
<dbReference type="GO" id="GO:0009368">
    <property type="term" value="C:endopeptidase Clp complex"/>
    <property type="evidence" value="ECO:0007669"/>
    <property type="project" value="TreeGrafter"/>
</dbReference>
<dbReference type="GO" id="GO:0004176">
    <property type="term" value="F:ATP-dependent peptidase activity"/>
    <property type="evidence" value="ECO:0007669"/>
    <property type="project" value="InterPro"/>
</dbReference>
<dbReference type="GO" id="GO:0051117">
    <property type="term" value="F:ATPase binding"/>
    <property type="evidence" value="ECO:0007669"/>
    <property type="project" value="TreeGrafter"/>
</dbReference>
<dbReference type="GO" id="GO:0004252">
    <property type="term" value="F:serine-type endopeptidase activity"/>
    <property type="evidence" value="ECO:0007669"/>
    <property type="project" value="UniProtKB-UniRule"/>
</dbReference>
<dbReference type="GO" id="GO:0006515">
    <property type="term" value="P:protein quality control for misfolded or incompletely synthesized proteins"/>
    <property type="evidence" value="ECO:0007669"/>
    <property type="project" value="TreeGrafter"/>
</dbReference>
<dbReference type="CDD" id="cd07017">
    <property type="entry name" value="S14_ClpP_2"/>
    <property type="match status" value="1"/>
</dbReference>
<dbReference type="FunFam" id="3.90.226.10:FF:000001">
    <property type="entry name" value="ATP-dependent Clp protease proteolytic subunit"/>
    <property type="match status" value="1"/>
</dbReference>
<dbReference type="Gene3D" id="3.90.226.10">
    <property type="entry name" value="2-enoyl-CoA Hydratase, Chain A, domain 1"/>
    <property type="match status" value="1"/>
</dbReference>
<dbReference type="HAMAP" id="MF_00444">
    <property type="entry name" value="ClpP"/>
    <property type="match status" value="1"/>
</dbReference>
<dbReference type="InterPro" id="IPR001907">
    <property type="entry name" value="ClpP"/>
</dbReference>
<dbReference type="InterPro" id="IPR029045">
    <property type="entry name" value="ClpP/crotonase-like_dom_sf"/>
</dbReference>
<dbReference type="InterPro" id="IPR023562">
    <property type="entry name" value="ClpP/TepA"/>
</dbReference>
<dbReference type="InterPro" id="IPR033135">
    <property type="entry name" value="ClpP_His_AS"/>
</dbReference>
<dbReference type="NCBIfam" id="TIGR00493">
    <property type="entry name" value="clpP"/>
    <property type="match status" value="1"/>
</dbReference>
<dbReference type="NCBIfam" id="NF001368">
    <property type="entry name" value="PRK00277.1"/>
    <property type="match status" value="1"/>
</dbReference>
<dbReference type="NCBIfam" id="NF009205">
    <property type="entry name" value="PRK12553.1"/>
    <property type="match status" value="1"/>
</dbReference>
<dbReference type="PANTHER" id="PTHR10381">
    <property type="entry name" value="ATP-DEPENDENT CLP PROTEASE PROTEOLYTIC SUBUNIT"/>
    <property type="match status" value="1"/>
</dbReference>
<dbReference type="PANTHER" id="PTHR10381:SF70">
    <property type="entry name" value="ATP-DEPENDENT CLP PROTEASE PROTEOLYTIC SUBUNIT"/>
    <property type="match status" value="1"/>
</dbReference>
<dbReference type="Pfam" id="PF00574">
    <property type="entry name" value="CLP_protease"/>
    <property type="match status" value="1"/>
</dbReference>
<dbReference type="PRINTS" id="PR00127">
    <property type="entry name" value="CLPPROTEASEP"/>
</dbReference>
<dbReference type="SUPFAM" id="SSF52096">
    <property type="entry name" value="ClpP/crotonase"/>
    <property type="match status" value="1"/>
</dbReference>
<dbReference type="PROSITE" id="PS00382">
    <property type="entry name" value="CLP_PROTEASE_HIS"/>
    <property type="match status" value="1"/>
</dbReference>
<gene>
    <name evidence="1" type="primary">clpP1</name>
    <name type="ordered locus">Ava_0547</name>
</gene>
<feature type="chain" id="PRO_0000236379" description="ATP-dependent Clp protease proteolytic subunit 1">
    <location>
        <begin position="1"/>
        <end position="204"/>
    </location>
</feature>
<feature type="active site" description="Nucleophile" evidence="1">
    <location>
        <position position="97"/>
    </location>
</feature>
<feature type="active site" evidence="1">
    <location>
        <position position="122"/>
    </location>
</feature>
<evidence type="ECO:0000255" key="1">
    <source>
        <dbReference type="HAMAP-Rule" id="MF_00444"/>
    </source>
</evidence>
<organism>
    <name type="scientific">Trichormus variabilis (strain ATCC 29413 / PCC 7937)</name>
    <name type="common">Anabaena variabilis</name>
    <dbReference type="NCBI Taxonomy" id="240292"/>
    <lineage>
        <taxon>Bacteria</taxon>
        <taxon>Bacillati</taxon>
        <taxon>Cyanobacteriota</taxon>
        <taxon>Cyanophyceae</taxon>
        <taxon>Nostocales</taxon>
        <taxon>Nostocaceae</taxon>
        <taxon>Trichormus</taxon>
    </lineage>
</organism>
<accession>Q3MFR5</accession>
<keyword id="KW-0963">Cytoplasm</keyword>
<keyword id="KW-0378">Hydrolase</keyword>
<keyword id="KW-0645">Protease</keyword>
<keyword id="KW-0720">Serine protease</keyword>
<proteinExistence type="inferred from homology"/>